<sequence length="80" mass="9746">MFSRAQVRRALQRVPGKQRFGIYRFLPFFFVLGGAMEWIMIKVRVGQETFYDVYRRKASERQYQRRLEDTSETNLHKLIK</sequence>
<comment type="function">
    <text evidence="1 3">Required for the assembly and stability of the mitochondrial ubiquinol-cytochrome c reductase complex (complex III (CIII) or cytochrome b-c1 complex), a multisubunit transmembrane complex that is part of the mitochondrial electron transport chain (ETC) which drives oxidative phosphorylation (PubMed:35977508). Mediates early complex III biogenesis (PubMed:35977508). Participates in regulating the levels of electron transport chain proteins, and therefore energy supply, in response to changes in energy demand (PubMed:35977508). Also required for cytochrome c oxidase complex (complex IV) assembly (By similarity).</text>
</comment>
<comment type="subunit">
    <text evidence="1 3">Associates with the mitochondrial ribosome. Interacts with UQCC6. Interacts with MT-CYB; interacts with newly synthesizes MT-CYB (By similarity). Forms a complex, named COMB/coordinator of mitochondrial CYTB biogenesis, composed of UQCC1, UQCC2, UQCC4, UQCC5 and UQCC6; stabilizes nascent cytochrome b/MT-CYB and promotes its membrane insertion (PubMed:35977508).</text>
</comment>
<comment type="subcellular location">
    <subcellularLocation>
        <location evidence="3">Mitochondrion inner membrane</location>
        <topology evidence="2">Single-pass membrane protein</topology>
    </subcellularLocation>
</comment>
<comment type="alternative products">
    <event type="alternative splicing"/>
    <isoform>
        <id>Q8C1Q6-1</id>
        <name>1</name>
        <sequence type="displayed"/>
    </isoform>
    <isoform>
        <id>Q8C1Q6-2</id>
        <name>2</name>
        <sequence type="described" ref="VSP_035265"/>
    </isoform>
    <isoform>
        <id>Q8C1Q6-3</id>
        <name>3</name>
        <sequence type="described" ref="VSP_035266 VSP_035267"/>
    </isoform>
</comment>
<comment type="similarity">
    <text evidence="5">Belongs to the UQCC5 family.</text>
</comment>
<comment type="sequence caution" evidence="5">
    <conflict type="erroneous initiation">
        <sequence resource="EMBL-CDS" id="BAC25173"/>
    </conflict>
    <text>Extended N-terminus.</text>
</comment>
<comment type="sequence caution" evidence="5">
    <conflict type="erroneous initiation">
        <sequence resource="EMBL-CDS" id="BAC25215"/>
    </conflict>
    <text>Extended N-terminus.</text>
</comment>
<proteinExistence type="evidence at protein level"/>
<name>UQCC5_MOUSE</name>
<organism evidence="7">
    <name type="scientific">Mus musculus</name>
    <name type="common">Mouse</name>
    <dbReference type="NCBI Taxonomy" id="10090"/>
    <lineage>
        <taxon>Eukaryota</taxon>
        <taxon>Metazoa</taxon>
        <taxon>Chordata</taxon>
        <taxon>Craniata</taxon>
        <taxon>Vertebrata</taxon>
        <taxon>Euteleostomi</taxon>
        <taxon>Mammalia</taxon>
        <taxon>Eutheria</taxon>
        <taxon>Euarchontoglires</taxon>
        <taxon>Glires</taxon>
        <taxon>Rodentia</taxon>
        <taxon>Myomorpha</taxon>
        <taxon>Muroidea</taxon>
        <taxon>Muridae</taxon>
        <taxon>Murinae</taxon>
        <taxon>Mus</taxon>
        <taxon>Mus</taxon>
    </lineage>
</organism>
<reference key="1">
    <citation type="journal article" date="2005" name="Science">
        <title>The transcriptional landscape of the mammalian genome.</title>
        <authorList>
            <person name="Carninci P."/>
            <person name="Kasukawa T."/>
            <person name="Katayama S."/>
            <person name="Gough J."/>
            <person name="Frith M.C."/>
            <person name="Maeda N."/>
            <person name="Oyama R."/>
            <person name="Ravasi T."/>
            <person name="Lenhard B."/>
            <person name="Wells C."/>
            <person name="Kodzius R."/>
            <person name="Shimokawa K."/>
            <person name="Bajic V.B."/>
            <person name="Brenner S.E."/>
            <person name="Batalov S."/>
            <person name="Forrest A.R."/>
            <person name="Zavolan M."/>
            <person name="Davis M.J."/>
            <person name="Wilming L.G."/>
            <person name="Aidinis V."/>
            <person name="Allen J.E."/>
            <person name="Ambesi-Impiombato A."/>
            <person name="Apweiler R."/>
            <person name="Aturaliya R.N."/>
            <person name="Bailey T.L."/>
            <person name="Bansal M."/>
            <person name="Baxter L."/>
            <person name="Beisel K.W."/>
            <person name="Bersano T."/>
            <person name="Bono H."/>
            <person name="Chalk A.M."/>
            <person name="Chiu K.P."/>
            <person name="Choudhary V."/>
            <person name="Christoffels A."/>
            <person name="Clutterbuck D.R."/>
            <person name="Crowe M.L."/>
            <person name="Dalla E."/>
            <person name="Dalrymple B.P."/>
            <person name="de Bono B."/>
            <person name="Della Gatta G."/>
            <person name="di Bernardo D."/>
            <person name="Down T."/>
            <person name="Engstrom P."/>
            <person name="Fagiolini M."/>
            <person name="Faulkner G."/>
            <person name="Fletcher C.F."/>
            <person name="Fukushima T."/>
            <person name="Furuno M."/>
            <person name="Futaki S."/>
            <person name="Gariboldi M."/>
            <person name="Georgii-Hemming P."/>
            <person name="Gingeras T.R."/>
            <person name="Gojobori T."/>
            <person name="Green R.E."/>
            <person name="Gustincich S."/>
            <person name="Harbers M."/>
            <person name="Hayashi Y."/>
            <person name="Hensch T.K."/>
            <person name="Hirokawa N."/>
            <person name="Hill D."/>
            <person name="Huminiecki L."/>
            <person name="Iacono M."/>
            <person name="Ikeo K."/>
            <person name="Iwama A."/>
            <person name="Ishikawa T."/>
            <person name="Jakt M."/>
            <person name="Kanapin A."/>
            <person name="Katoh M."/>
            <person name="Kawasawa Y."/>
            <person name="Kelso J."/>
            <person name="Kitamura H."/>
            <person name="Kitano H."/>
            <person name="Kollias G."/>
            <person name="Krishnan S.P."/>
            <person name="Kruger A."/>
            <person name="Kummerfeld S.K."/>
            <person name="Kurochkin I.V."/>
            <person name="Lareau L.F."/>
            <person name="Lazarevic D."/>
            <person name="Lipovich L."/>
            <person name="Liu J."/>
            <person name="Liuni S."/>
            <person name="McWilliam S."/>
            <person name="Madan Babu M."/>
            <person name="Madera M."/>
            <person name="Marchionni L."/>
            <person name="Matsuda H."/>
            <person name="Matsuzawa S."/>
            <person name="Miki H."/>
            <person name="Mignone F."/>
            <person name="Miyake S."/>
            <person name="Morris K."/>
            <person name="Mottagui-Tabar S."/>
            <person name="Mulder N."/>
            <person name="Nakano N."/>
            <person name="Nakauchi H."/>
            <person name="Ng P."/>
            <person name="Nilsson R."/>
            <person name="Nishiguchi S."/>
            <person name="Nishikawa S."/>
            <person name="Nori F."/>
            <person name="Ohara O."/>
            <person name="Okazaki Y."/>
            <person name="Orlando V."/>
            <person name="Pang K.C."/>
            <person name="Pavan W.J."/>
            <person name="Pavesi G."/>
            <person name="Pesole G."/>
            <person name="Petrovsky N."/>
            <person name="Piazza S."/>
            <person name="Reed J."/>
            <person name="Reid J.F."/>
            <person name="Ring B.Z."/>
            <person name="Ringwald M."/>
            <person name="Rost B."/>
            <person name="Ruan Y."/>
            <person name="Salzberg S.L."/>
            <person name="Sandelin A."/>
            <person name="Schneider C."/>
            <person name="Schoenbach C."/>
            <person name="Sekiguchi K."/>
            <person name="Semple C.A."/>
            <person name="Seno S."/>
            <person name="Sessa L."/>
            <person name="Sheng Y."/>
            <person name="Shibata Y."/>
            <person name="Shimada H."/>
            <person name="Shimada K."/>
            <person name="Silva D."/>
            <person name="Sinclair B."/>
            <person name="Sperling S."/>
            <person name="Stupka E."/>
            <person name="Sugiura K."/>
            <person name="Sultana R."/>
            <person name="Takenaka Y."/>
            <person name="Taki K."/>
            <person name="Tammoja K."/>
            <person name="Tan S.L."/>
            <person name="Tang S."/>
            <person name="Taylor M.S."/>
            <person name="Tegner J."/>
            <person name="Teichmann S.A."/>
            <person name="Ueda H.R."/>
            <person name="van Nimwegen E."/>
            <person name="Verardo R."/>
            <person name="Wei C.L."/>
            <person name="Yagi K."/>
            <person name="Yamanishi H."/>
            <person name="Zabarovsky E."/>
            <person name="Zhu S."/>
            <person name="Zimmer A."/>
            <person name="Hide W."/>
            <person name="Bult C."/>
            <person name="Grimmond S.M."/>
            <person name="Teasdale R.D."/>
            <person name="Liu E.T."/>
            <person name="Brusic V."/>
            <person name="Quackenbush J."/>
            <person name="Wahlestedt C."/>
            <person name="Mattick J.S."/>
            <person name="Hume D.A."/>
            <person name="Kai C."/>
            <person name="Sasaki D."/>
            <person name="Tomaru Y."/>
            <person name="Fukuda S."/>
            <person name="Kanamori-Katayama M."/>
            <person name="Suzuki M."/>
            <person name="Aoki J."/>
            <person name="Arakawa T."/>
            <person name="Iida J."/>
            <person name="Imamura K."/>
            <person name="Itoh M."/>
            <person name="Kato T."/>
            <person name="Kawaji H."/>
            <person name="Kawagashira N."/>
            <person name="Kawashima T."/>
            <person name="Kojima M."/>
            <person name="Kondo S."/>
            <person name="Konno H."/>
            <person name="Nakano K."/>
            <person name="Ninomiya N."/>
            <person name="Nishio T."/>
            <person name="Okada M."/>
            <person name="Plessy C."/>
            <person name="Shibata K."/>
            <person name="Shiraki T."/>
            <person name="Suzuki S."/>
            <person name="Tagami M."/>
            <person name="Waki K."/>
            <person name="Watahiki A."/>
            <person name="Okamura-Oho Y."/>
            <person name="Suzuki H."/>
            <person name="Kawai J."/>
            <person name="Hayashizaki Y."/>
        </authorList>
    </citation>
    <scope>NUCLEOTIDE SEQUENCE [LARGE SCALE MRNA] (ISOFORMS 1; 2 AND 3)</scope>
    <source>
        <strain>C57BL/6J</strain>
        <tissue>Cerebellum</tissue>
        <tissue>Pancreas</tissue>
        <tissue>Small intestine</tissue>
    </source>
</reference>
<reference key="2">
    <citation type="journal article" date="2010" name="Cell">
        <title>A tissue-specific atlas of mouse protein phosphorylation and expression.</title>
        <authorList>
            <person name="Huttlin E.L."/>
            <person name="Jedrychowski M.P."/>
            <person name="Elias J.E."/>
            <person name="Goswami T."/>
            <person name="Rad R."/>
            <person name="Beausoleil S.A."/>
            <person name="Villen J."/>
            <person name="Haas W."/>
            <person name="Sowa M.E."/>
            <person name="Gygi S.P."/>
        </authorList>
    </citation>
    <scope>IDENTIFICATION BY MASS SPECTROMETRY [LARGE SCALE ANALYSIS]</scope>
    <source>
        <tissue>Brown adipose tissue</tissue>
        <tissue>Heart</tissue>
        <tissue>Kidney</tissue>
        <tissue>Liver</tissue>
        <tissue>Spleen</tissue>
    </source>
</reference>
<reference key="3">
    <citation type="journal article" date="2022" name="Cell Rep.">
        <title>Mitochondrial microproteins link metabolic cues to respiratory chain biogenesis.</title>
        <authorList>
            <person name="Liang C."/>
            <person name="Zhang S."/>
            <person name="Robinson D."/>
            <person name="Ploeg M.V."/>
            <person name="Wilson R."/>
            <person name="Nah J."/>
            <person name="Taylor D."/>
            <person name="Beh S."/>
            <person name="Lim R."/>
            <person name="Sun L."/>
            <person name="Muoio D.M."/>
            <person name="Stroud D.A."/>
            <person name="Ho L."/>
        </authorList>
    </citation>
    <scope>FUNCTION</scope>
    <scope>SUBUNIT</scope>
    <scope>TOPOLOGY</scope>
    <scope>SUBCELLULAR LOCATION</scope>
</reference>
<dbReference type="EMBL" id="AK007443">
    <property type="protein sequence ID" value="BAC25173.1"/>
    <property type="status" value="ALT_INIT"/>
    <property type="molecule type" value="mRNA"/>
</dbReference>
<dbReference type="EMBL" id="AK008341">
    <property type="protein sequence ID" value="BAC25215.1"/>
    <property type="status" value="ALT_INIT"/>
    <property type="molecule type" value="mRNA"/>
</dbReference>
<dbReference type="EMBL" id="AK036279">
    <property type="protein sequence ID" value="BAC29371.1"/>
    <property type="molecule type" value="mRNA"/>
</dbReference>
<dbReference type="CCDS" id="CCDS84104.1">
    <molecule id="Q8C1Q6-2"/>
</dbReference>
<dbReference type="CCDS" id="CCDS84105.1">
    <molecule id="Q8C1Q6-1"/>
</dbReference>
<dbReference type="RefSeq" id="NP_001295020.1">
    <molecule id="Q8C1Q6-1"/>
    <property type="nucleotide sequence ID" value="NM_001308091.2"/>
</dbReference>
<dbReference type="RefSeq" id="NP_001295393.1">
    <molecule id="Q8C1Q6-2"/>
    <property type="nucleotide sequence ID" value="NM_001308464.2"/>
</dbReference>
<dbReference type="RefSeq" id="NP_001295395.1">
    <property type="nucleotide sequence ID" value="NM_001308466.1"/>
</dbReference>
<dbReference type="FunCoup" id="Q8C1Q6">
    <property type="interactions" value="598"/>
</dbReference>
<dbReference type="STRING" id="10090.ENSMUSP00000145018"/>
<dbReference type="iPTMnet" id="Q8C1Q6"/>
<dbReference type="PhosphoSitePlus" id="Q8C1Q6"/>
<dbReference type="PaxDb" id="10090-ENSMUSP00000067418"/>
<dbReference type="PeptideAtlas" id="Q8C1Q6"/>
<dbReference type="ProteomicsDB" id="261435">
    <molecule id="Q8C1Q6-1"/>
</dbReference>
<dbReference type="Pumba" id="Q8C1Q6"/>
<dbReference type="Antibodypedia" id="64270">
    <property type="antibodies" value="36 antibodies from 6 providers"/>
</dbReference>
<dbReference type="Ensembl" id="ENSMUST00000049732.11">
    <molecule id="Q8C1Q6-1"/>
    <property type="protein sequence ID" value="ENSMUSP00000050634.6"/>
    <property type="gene ID" value="ENSMUSG00000058351.12"/>
</dbReference>
<dbReference type="Ensembl" id="ENSMUST00000090205.5">
    <molecule id="Q8C1Q6-3"/>
    <property type="protein sequence ID" value="ENSMUSP00000087673.4"/>
    <property type="gene ID" value="ENSMUSG00000058351.12"/>
</dbReference>
<dbReference type="Ensembl" id="ENSMUST00000203261.3">
    <molecule id="Q8C1Q6-2"/>
    <property type="protein sequence ID" value="ENSMUSP00000145018.2"/>
    <property type="gene ID" value="ENSMUSG00000058351.12"/>
</dbReference>
<dbReference type="GeneID" id="66487"/>
<dbReference type="KEGG" id="mmu:66487"/>
<dbReference type="UCSC" id="uc007swr.2">
    <molecule id="Q8C1Q6-1"/>
    <property type="organism name" value="mouse"/>
</dbReference>
<dbReference type="AGR" id="MGI:1913737"/>
<dbReference type="CTD" id="440957"/>
<dbReference type="MGI" id="MGI:1913737">
    <property type="gene designation" value="Uqcc5"/>
</dbReference>
<dbReference type="VEuPathDB" id="HostDB:ENSMUSG00000058351"/>
<dbReference type="GeneTree" id="ENSGT00390000013390"/>
<dbReference type="HOGENOM" id="CLU_2276535_0_0_1"/>
<dbReference type="InParanoid" id="Q8C1Q6"/>
<dbReference type="OMA" id="WPGRRIF"/>
<dbReference type="OrthoDB" id="13130at9989"/>
<dbReference type="PhylomeDB" id="Q8C1Q6"/>
<dbReference type="TreeFam" id="TF324402"/>
<dbReference type="BioGRID-ORCS" id="66487">
    <property type="hits" value="0 hits in 5 CRISPR screens"/>
</dbReference>
<dbReference type="ChiTaRS" id="Smim4">
    <property type="organism name" value="mouse"/>
</dbReference>
<dbReference type="PRO" id="PR:Q8C1Q6"/>
<dbReference type="Proteomes" id="UP000000589">
    <property type="component" value="Chromosome 14"/>
</dbReference>
<dbReference type="RNAct" id="Q8C1Q6">
    <property type="molecule type" value="protein"/>
</dbReference>
<dbReference type="Bgee" id="ENSMUSG00000058351">
    <property type="expression patterns" value="Expressed in facial nucleus and 226 other cell types or tissues"/>
</dbReference>
<dbReference type="ExpressionAtlas" id="Q8C1Q6">
    <property type="expression patterns" value="baseline and differential"/>
</dbReference>
<dbReference type="GO" id="GO:0005743">
    <property type="term" value="C:mitochondrial inner membrane"/>
    <property type="evidence" value="ECO:0000314"/>
    <property type="project" value="UniProtKB"/>
</dbReference>
<dbReference type="GO" id="GO:0005739">
    <property type="term" value="C:mitochondrion"/>
    <property type="evidence" value="ECO:0007005"/>
    <property type="project" value="MGI"/>
</dbReference>
<dbReference type="GO" id="GO:0097177">
    <property type="term" value="F:mitochondrial ribosome binding"/>
    <property type="evidence" value="ECO:0000250"/>
    <property type="project" value="UniProtKB"/>
</dbReference>
<dbReference type="GO" id="GO:0033617">
    <property type="term" value="P:mitochondrial cytochrome c oxidase assembly"/>
    <property type="evidence" value="ECO:0000250"/>
    <property type="project" value="UniProtKB"/>
</dbReference>
<dbReference type="GO" id="GO:0034551">
    <property type="term" value="P:mitochondrial respiratory chain complex III assembly"/>
    <property type="evidence" value="ECO:0000315"/>
    <property type="project" value="UniProtKB"/>
</dbReference>
<dbReference type="InterPro" id="IPR028183">
    <property type="entry name" value="UQCC5"/>
</dbReference>
<dbReference type="PANTHER" id="PTHR35250">
    <property type="entry name" value="SMALL INTEGRAL MEMBRANE PROTEIN 4"/>
    <property type="match status" value="1"/>
</dbReference>
<dbReference type="PANTHER" id="PTHR35250:SF1">
    <property type="entry name" value="UBIQUINOL-CYTOCHROME-C REDUCTASE COMPLEX ASSEMBLY FACTOR 5"/>
    <property type="match status" value="1"/>
</dbReference>
<dbReference type="Pfam" id="PF15114">
    <property type="entry name" value="UPF0640"/>
    <property type="match status" value="1"/>
</dbReference>
<feature type="chain" id="PRO_0000349244" description="Ubiquinol-cytochrome c reductase complex assembly factor 5">
    <location>
        <begin position="1"/>
        <end position="80"/>
    </location>
</feature>
<feature type="topological domain" description="Mitochondrial matrix" evidence="1">
    <location>
        <begin position="1"/>
        <end position="19"/>
    </location>
</feature>
<feature type="transmembrane region" description="Helical" evidence="2">
    <location>
        <begin position="20"/>
        <end position="41"/>
    </location>
</feature>
<feature type="topological domain" description="Mitochondrial intermembrane" evidence="3">
    <location>
        <begin position="42"/>
        <end position="80"/>
    </location>
</feature>
<feature type="splice variant" id="VSP_035265" description="In isoform 2." evidence="4">
    <original>YDVYRRKASERQYQRRLEDTSETNLHKLIK</original>
    <variation>CFLPEMFKMKTTKHLSLDLANIPSKQRITDLCARSSTKVLSRCDVVLSYLST</variation>
    <location>
        <begin position="51"/>
        <end position="80"/>
    </location>
</feature>
<feature type="splice variant" id="VSP_035266" description="In isoform 3." evidence="4">
    <original>YDVYRRKASE</original>
    <variation>FSGLVRWLSS</variation>
    <location>
        <begin position="51"/>
        <end position="60"/>
    </location>
</feature>
<feature type="splice variant" id="VSP_035267" description="In isoform 3." evidence="4">
    <location>
        <begin position="61"/>
        <end position="80"/>
    </location>
</feature>
<keyword id="KW-0025">Alternative splicing</keyword>
<keyword id="KW-0472">Membrane</keyword>
<keyword id="KW-0496">Mitochondrion</keyword>
<keyword id="KW-0999">Mitochondrion inner membrane</keyword>
<keyword id="KW-1185">Reference proteome</keyword>
<keyword id="KW-0812">Transmembrane</keyword>
<keyword id="KW-1133">Transmembrane helix</keyword>
<evidence type="ECO:0000250" key="1">
    <source>
        <dbReference type="UniProtKB" id="Q8WVI0"/>
    </source>
</evidence>
<evidence type="ECO:0000255" key="2"/>
<evidence type="ECO:0000269" key="3">
    <source>
    </source>
</evidence>
<evidence type="ECO:0000303" key="4">
    <source>
    </source>
</evidence>
<evidence type="ECO:0000305" key="5"/>
<evidence type="ECO:0000312" key="6">
    <source>
        <dbReference type="MGI" id="MGI:1913737"/>
    </source>
</evidence>
<evidence type="ECO:0000312" key="7">
    <source>
        <dbReference type="Proteomes" id="UP000000589"/>
    </source>
</evidence>
<protein>
    <recommendedName>
        <fullName evidence="5">Ubiquinol-cytochrome c reductase complex assembly factor 5</fullName>
    </recommendedName>
    <alternativeName>
        <fullName evidence="5">Small integral membrane protein 4</fullName>
    </alternativeName>
    <alternativeName>
        <fullName>Small nucleolar RNA host gene 8</fullName>
    </alternativeName>
</protein>
<gene>
    <name evidence="6" type="primary">Uqcc5</name>
    <name evidence="6" type="synonym">Smim4</name>
</gene>
<accession>Q8C1Q6</accession>
<accession>Q8BZ92</accession>
<accession>Q8C1P1</accession>